<dbReference type="EC" id="5.6.1.7" evidence="2"/>
<dbReference type="EMBL" id="X54793">
    <property type="protein sequence ID" value="CAA38564.1"/>
    <property type="molecule type" value="mRNA"/>
</dbReference>
<dbReference type="EMBL" id="U68562">
    <property type="protein sequence ID" value="AAC53362.1"/>
    <property type="molecule type" value="Genomic_DNA"/>
</dbReference>
<dbReference type="EMBL" id="BC086507">
    <property type="protein sequence ID" value="AAH86507.1"/>
    <property type="molecule type" value="mRNA"/>
</dbReference>
<dbReference type="EMBL" id="X53585">
    <property type="protein sequence ID" value="CAA37654.1"/>
    <property type="molecule type" value="mRNA"/>
</dbReference>
<dbReference type="PIR" id="S13089">
    <property type="entry name" value="HHRT60"/>
</dbReference>
<dbReference type="RefSeq" id="NP_071565.2">
    <property type="nucleotide sequence ID" value="NM_022229.2"/>
</dbReference>
<dbReference type="RefSeq" id="XP_006244994.1">
    <property type="nucleotide sequence ID" value="XM_006244932.4"/>
</dbReference>
<dbReference type="SMR" id="P63039"/>
<dbReference type="BioGRID" id="248912">
    <property type="interactions" value="12"/>
</dbReference>
<dbReference type="FunCoup" id="P63039">
    <property type="interactions" value="2517"/>
</dbReference>
<dbReference type="IntAct" id="P63039">
    <property type="interactions" value="11"/>
</dbReference>
<dbReference type="MINT" id="P63039"/>
<dbReference type="STRING" id="10116.ENSRNOP00000063666"/>
<dbReference type="CarbonylDB" id="P63039"/>
<dbReference type="GlyGen" id="P63039">
    <property type="glycosylation" value="3 sites, 1 O-linked glycan (2 sites)"/>
</dbReference>
<dbReference type="iPTMnet" id="P63039"/>
<dbReference type="PhosphoSitePlus" id="P63039"/>
<dbReference type="SwissPalm" id="P63039"/>
<dbReference type="jPOST" id="P63039"/>
<dbReference type="PaxDb" id="10116-ENSRNOP00000063666"/>
<dbReference type="Ensembl" id="ENSRNOT00000066589.3">
    <property type="protein sequence ID" value="ENSRNOP00000063666.2"/>
    <property type="gene ID" value="ENSRNOG00000014525.6"/>
</dbReference>
<dbReference type="GeneID" id="63868"/>
<dbReference type="KEGG" id="rno:63868"/>
<dbReference type="UCSC" id="RGD:621314">
    <property type="organism name" value="rat"/>
</dbReference>
<dbReference type="AGR" id="RGD:621314"/>
<dbReference type="CTD" id="3329"/>
<dbReference type="RGD" id="621314">
    <property type="gene designation" value="Hspd1"/>
</dbReference>
<dbReference type="eggNOG" id="KOG0356">
    <property type="taxonomic scope" value="Eukaryota"/>
</dbReference>
<dbReference type="GeneTree" id="ENSGT00390000005727"/>
<dbReference type="HOGENOM" id="CLU_016503_3_0_1"/>
<dbReference type="InParanoid" id="P63039"/>
<dbReference type="OMA" id="TDTDKME"/>
<dbReference type="OrthoDB" id="1733909at2759"/>
<dbReference type="PhylomeDB" id="P63039"/>
<dbReference type="TreeFam" id="TF300475"/>
<dbReference type="Reactome" id="R-RNO-1268020">
    <property type="pathway name" value="Mitochondrial protein import"/>
</dbReference>
<dbReference type="Reactome" id="R-RNO-9837999">
    <property type="pathway name" value="Mitochondrial protein degradation"/>
</dbReference>
<dbReference type="PRO" id="PR:P63039"/>
<dbReference type="Proteomes" id="UP000002494">
    <property type="component" value="Chromosome 9"/>
</dbReference>
<dbReference type="Bgee" id="ENSRNOG00000014525">
    <property type="expression patterns" value="Expressed in ovary and 20 other cell types or tissues"/>
</dbReference>
<dbReference type="ExpressionAtlas" id="P63039">
    <property type="expression patterns" value="baseline and differential"/>
</dbReference>
<dbReference type="GO" id="GO:0009986">
    <property type="term" value="C:cell surface"/>
    <property type="evidence" value="ECO:0000314"/>
    <property type="project" value="RGD"/>
</dbReference>
<dbReference type="GO" id="GO:0005905">
    <property type="term" value="C:clathrin-coated pit"/>
    <property type="evidence" value="ECO:0000266"/>
    <property type="project" value="RGD"/>
</dbReference>
<dbReference type="GO" id="GO:0030135">
    <property type="term" value="C:coated vesicle"/>
    <property type="evidence" value="ECO:0000266"/>
    <property type="project" value="RGD"/>
</dbReference>
<dbReference type="GO" id="GO:0005737">
    <property type="term" value="C:cytoplasm"/>
    <property type="evidence" value="ECO:0000266"/>
    <property type="project" value="RGD"/>
</dbReference>
<dbReference type="GO" id="GO:0005829">
    <property type="term" value="C:cytosol"/>
    <property type="evidence" value="ECO:0000266"/>
    <property type="project" value="RGD"/>
</dbReference>
<dbReference type="GO" id="GO:0005769">
    <property type="term" value="C:early endosome"/>
    <property type="evidence" value="ECO:0000266"/>
    <property type="project" value="RGD"/>
</dbReference>
<dbReference type="GO" id="GO:0070062">
    <property type="term" value="C:extracellular exosome"/>
    <property type="evidence" value="ECO:0000266"/>
    <property type="project" value="RGD"/>
</dbReference>
<dbReference type="GO" id="GO:0005615">
    <property type="term" value="C:extracellular space"/>
    <property type="evidence" value="ECO:0000314"/>
    <property type="project" value="RGD"/>
</dbReference>
<dbReference type="GO" id="GO:0031985">
    <property type="term" value="C:Golgi cisterna"/>
    <property type="evidence" value="ECO:0000314"/>
    <property type="project" value="RGD"/>
</dbReference>
<dbReference type="GO" id="GO:0043231">
    <property type="term" value="C:intracellular membrane-bounded organelle"/>
    <property type="evidence" value="ECO:0000266"/>
    <property type="project" value="RGD"/>
</dbReference>
<dbReference type="GO" id="GO:0046696">
    <property type="term" value="C:lipopolysaccharide receptor complex"/>
    <property type="evidence" value="ECO:0000266"/>
    <property type="project" value="RGD"/>
</dbReference>
<dbReference type="GO" id="GO:0016020">
    <property type="term" value="C:membrane"/>
    <property type="evidence" value="ECO:0000266"/>
    <property type="project" value="RGD"/>
</dbReference>
<dbReference type="GO" id="GO:0140494">
    <property type="term" value="C:migrasome"/>
    <property type="evidence" value="ECO:0000266"/>
    <property type="project" value="RGD"/>
</dbReference>
<dbReference type="GO" id="GO:0030061">
    <property type="term" value="C:mitochondrial crista"/>
    <property type="evidence" value="ECO:0000314"/>
    <property type="project" value="RGD"/>
</dbReference>
<dbReference type="GO" id="GO:0005743">
    <property type="term" value="C:mitochondrial inner membrane"/>
    <property type="evidence" value="ECO:0000314"/>
    <property type="project" value="RGD"/>
</dbReference>
<dbReference type="GO" id="GO:0005759">
    <property type="term" value="C:mitochondrial matrix"/>
    <property type="evidence" value="ECO:0000266"/>
    <property type="project" value="RGD"/>
</dbReference>
<dbReference type="GO" id="GO:0005739">
    <property type="term" value="C:mitochondrion"/>
    <property type="evidence" value="ECO:0000266"/>
    <property type="project" value="RGD"/>
</dbReference>
<dbReference type="GO" id="GO:0005782">
    <property type="term" value="C:peroxisomal matrix"/>
    <property type="evidence" value="ECO:0000314"/>
    <property type="project" value="RGD"/>
</dbReference>
<dbReference type="GO" id="GO:0005886">
    <property type="term" value="C:plasma membrane"/>
    <property type="evidence" value="ECO:0000266"/>
    <property type="project" value="RGD"/>
</dbReference>
<dbReference type="GO" id="GO:0032991">
    <property type="term" value="C:protein-containing complex"/>
    <property type="evidence" value="ECO:0000250"/>
    <property type="project" value="UniProtKB"/>
</dbReference>
<dbReference type="GO" id="GO:0030141">
    <property type="term" value="C:secretory granule"/>
    <property type="evidence" value="ECO:0000314"/>
    <property type="project" value="RGD"/>
</dbReference>
<dbReference type="GO" id="GO:0097225">
    <property type="term" value="C:sperm midpiece"/>
    <property type="evidence" value="ECO:0000266"/>
    <property type="project" value="RGD"/>
</dbReference>
<dbReference type="GO" id="GO:0097524">
    <property type="term" value="C:sperm plasma membrane"/>
    <property type="evidence" value="ECO:0000266"/>
    <property type="project" value="RGD"/>
</dbReference>
<dbReference type="GO" id="GO:0042588">
    <property type="term" value="C:zymogen granule"/>
    <property type="evidence" value="ECO:0000314"/>
    <property type="project" value="RGD"/>
</dbReference>
<dbReference type="GO" id="GO:0034186">
    <property type="term" value="F:apolipoprotein A-I binding"/>
    <property type="evidence" value="ECO:0000266"/>
    <property type="project" value="RGD"/>
</dbReference>
<dbReference type="GO" id="GO:0034185">
    <property type="term" value="F:apolipoprotein binding"/>
    <property type="evidence" value="ECO:0000266"/>
    <property type="project" value="RGD"/>
</dbReference>
<dbReference type="GO" id="GO:0005524">
    <property type="term" value="F:ATP binding"/>
    <property type="evidence" value="ECO:0007669"/>
    <property type="project" value="UniProtKB-KW"/>
</dbReference>
<dbReference type="GO" id="GO:0140662">
    <property type="term" value="F:ATP-dependent protein folding chaperone"/>
    <property type="evidence" value="ECO:0007669"/>
    <property type="project" value="InterPro"/>
</dbReference>
<dbReference type="GO" id="GO:0140608">
    <property type="term" value="F:cysteine-type endopeptidase activator activity"/>
    <property type="evidence" value="ECO:0000266"/>
    <property type="project" value="RGD"/>
</dbReference>
<dbReference type="GO" id="GO:0003725">
    <property type="term" value="F:double-stranded RNA binding"/>
    <property type="evidence" value="ECO:0000266"/>
    <property type="project" value="RGD"/>
</dbReference>
<dbReference type="GO" id="GO:0019899">
    <property type="term" value="F:enzyme binding"/>
    <property type="evidence" value="ECO:0000266"/>
    <property type="project" value="RGD"/>
</dbReference>
<dbReference type="GO" id="GO:0008035">
    <property type="term" value="F:high-density lipoprotein particle binding"/>
    <property type="evidence" value="ECO:0000266"/>
    <property type="project" value="RGD"/>
</dbReference>
<dbReference type="GO" id="GO:0016853">
    <property type="term" value="F:isomerase activity"/>
    <property type="evidence" value="ECO:0007669"/>
    <property type="project" value="UniProtKB-KW"/>
</dbReference>
<dbReference type="GO" id="GO:0001530">
    <property type="term" value="F:lipopolysaccharide binding"/>
    <property type="evidence" value="ECO:0000266"/>
    <property type="project" value="RGD"/>
</dbReference>
<dbReference type="GO" id="GO:0140030">
    <property type="term" value="F:modification-dependent protein binding"/>
    <property type="evidence" value="ECO:0000353"/>
    <property type="project" value="RGD"/>
</dbReference>
<dbReference type="GO" id="GO:0002039">
    <property type="term" value="F:p53 binding"/>
    <property type="evidence" value="ECO:0000266"/>
    <property type="project" value="RGD"/>
</dbReference>
<dbReference type="GO" id="GO:0044877">
    <property type="term" value="F:protein-containing complex binding"/>
    <property type="evidence" value="ECO:0000353"/>
    <property type="project" value="RGD"/>
</dbReference>
<dbReference type="GO" id="GO:0051087">
    <property type="term" value="F:protein-folding chaperone binding"/>
    <property type="evidence" value="ECO:0000266"/>
    <property type="project" value="RGD"/>
</dbReference>
<dbReference type="GO" id="GO:0031625">
    <property type="term" value="F:ubiquitin protein ligase binding"/>
    <property type="evidence" value="ECO:0000266"/>
    <property type="project" value="RGD"/>
</dbReference>
<dbReference type="GO" id="GO:0006458">
    <property type="term" value="P:'de novo' protein folding"/>
    <property type="evidence" value="ECO:0000305"/>
    <property type="project" value="RGD"/>
</dbReference>
<dbReference type="GO" id="GO:0008637">
    <property type="term" value="P:apoptotic mitochondrial changes"/>
    <property type="evidence" value="ECO:0000315"/>
    <property type="project" value="RGD"/>
</dbReference>
<dbReference type="GO" id="GO:0042113">
    <property type="term" value="P:B cell activation"/>
    <property type="evidence" value="ECO:0000266"/>
    <property type="project" value="RGD"/>
</dbReference>
<dbReference type="GO" id="GO:0042100">
    <property type="term" value="P:B cell proliferation"/>
    <property type="evidence" value="ECO:0000266"/>
    <property type="project" value="RGD"/>
</dbReference>
<dbReference type="GO" id="GO:0034605">
    <property type="term" value="P:cellular response to heat"/>
    <property type="evidence" value="ECO:0000270"/>
    <property type="project" value="RGD"/>
</dbReference>
<dbReference type="GO" id="GO:0098761">
    <property type="term" value="P:cellular response to interleukin-7"/>
    <property type="evidence" value="ECO:0000266"/>
    <property type="project" value="RGD"/>
</dbReference>
<dbReference type="GO" id="GO:0048291">
    <property type="term" value="P:isotype switching to IgG isotypes"/>
    <property type="evidence" value="ECO:0000266"/>
    <property type="project" value="RGD"/>
</dbReference>
<dbReference type="GO" id="GO:0034514">
    <property type="term" value="P:mitochondrial unfolded protein response"/>
    <property type="evidence" value="ECO:0000318"/>
    <property type="project" value="GO_Central"/>
</dbReference>
<dbReference type="GO" id="GO:0002755">
    <property type="term" value="P:MyD88-dependent toll-like receptor signaling pathway"/>
    <property type="evidence" value="ECO:0000266"/>
    <property type="project" value="RGD"/>
</dbReference>
<dbReference type="GO" id="GO:0043066">
    <property type="term" value="P:negative regulation of apoptotic process"/>
    <property type="evidence" value="ECO:0000315"/>
    <property type="project" value="RGD"/>
</dbReference>
<dbReference type="GO" id="GO:0071866">
    <property type="term" value="P:negative regulation of apoptotic process in bone marrow cell"/>
    <property type="evidence" value="ECO:0000315"/>
    <property type="project" value="RGD"/>
</dbReference>
<dbReference type="GO" id="GO:1900118">
    <property type="term" value="P:negative regulation of execution phase of apoptosis"/>
    <property type="evidence" value="ECO:0000266"/>
    <property type="project" value="RGD"/>
</dbReference>
<dbReference type="GO" id="GO:0043524">
    <property type="term" value="P:negative regulation of neuron apoptotic process"/>
    <property type="evidence" value="ECO:0000315"/>
    <property type="project" value="RGD"/>
</dbReference>
<dbReference type="GO" id="GO:1903427">
    <property type="term" value="P:negative regulation of reactive oxygen species biosynthetic process"/>
    <property type="evidence" value="ECO:0000315"/>
    <property type="project" value="RGD"/>
</dbReference>
<dbReference type="GO" id="GO:1900119">
    <property type="term" value="P:positive regulation of execution phase of apoptosis"/>
    <property type="evidence" value="ECO:0000266"/>
    <property type="project" value="RGD"/>
</dbReference>
<dbReference type="GO" id="GO:0032727">
    <property type="term" value="P:positive regulation of interferon-alpha production"/>
    <property type="evidence" value="ECO:0000266"/>
    <property type="project" value="RGD"/>
</dbReference>
<dbReference type="GO" id="GO:0032733">
    <property type="term" value="P:positive regulation of interleukin-10 production"/>
    <property type="evidence" value="ECO:0000266"/>
    <property type="project" value="RGD"/>
</dbReference>
<dbReference type="GO" id="GO:0032735">
    <property type="term" value="P:positive regulation of interleukin-12 production"/>
    <property type="evidence" value="ECO:0000266"/>
    <property type="project" value="RGD"/>
</dbReference>
<dbReference type="GO" id="GO:0032755">
    <property type="term" value="P:positive regulation of interleukin-6 production"/>
    <property type="evidence" value="ECO:0000315"/>
    <property type="project" value="RGD"/>
</dbReference>
<dbReference type="GO" id="GO:0043032">
    <property type="term" value="P:positive regulation of macrophage activation"/>
    <property type="evidence" value="ECO:0000266"/>
    <property type="project" value="RGD"/>
</dbReference>
<dbReference type="GO" id="GO:0050870">
    <property type="term" value="P:positive regulation of T cell activation"/>
    <property type="evidence" value="ECO:0000266"/>
    <property type="project" value="RGD"/>
</dbReference>
<dbReference type="GO" id="GO:0002842">
    <property type="term" value="P:positive regulation of T cell mediated immune response to tumor cell"/>
    <property type="evidence" value="ECO:0000266"/>
    <property type="project" value="RGD"/>
</dbReference>
<dbReference type="GO" id="GO:0032760">
    <property type="term" value="P:positive regulation of tumor necrosis factor production"/>
    <property type="evidence" value="ECO:0000315"/>
    <property type="project" value="RGD"/>
</dbReference>
<dbReference type="GO" id="GO:0032729">
    <property type="term" value="P:positive regulation of type II interferon production"/>
    <property type="evidence" value="ECO:0000266"/>
    <property type="project" value="RGD"/>
</dbReference>
<dbReference type="GO" id="GO:0006457">
    <property type="term" value="P:protein folding"/>
    <property type="evidence" value="ECO:0000318"/>
    <property type="project" value="GO_Central"/>
</dbReference>
<dbReference type="GO" id="GO:0045041">
    <property type="term" value="P:protein import into mitochondrial intermembrane space"/>
    <property type="evidence" value="ECO:0000318"/>
    <property type="project" value="GO_Central"/>
</dbReference>
<dbReference type="GO" id="GO:0042026">
    <property type="term" value="P:protein refolding"/>
    <property type="evidence" value="ECO:0000266"/>
    <property type="project" value="RGD"/>
</dbReference>
<dbReference type="GO" id="GO:0050821">
    <property type="term" value="P:protein stabilization"/>
    <property type="evidence" value="ECO:0000266"/>
    <property type="project" value="RGD"/>
</dbReference>
<dbReference type="GO" id="GO:0014823">
    <property type="term" value="P:response to activity"/>
    <property type="evidence" value="ECO:0000270"/>
    <property type="project" value="RGD"/>
</dbReference>
<dbReference type="GO" id="GO:0033198">
    <property type="term" value="P:response to ATP"/>
    <property type="evidence" value="ECO:0000270"/>
    <property type="project" value="RGD"/>
</dbReference>
<dbReference type="GO" id="GO:0042220">
    <property type="term" value="P:response to cocaine"/>
    <property type="evidence" value="ECO:0000270"/>
    <property type="project" value="RGD"/>
</dbReference>
<dbReference type="GO" id="GO:0009409">
    <property type="term" value="P:response to cold"/>
    <property type="evidence" value="ECO:0000250"/>
    <property type="project" value="AgBase"/>
</dbReference>
<dbReference type="GO" id="GO:0043627">
    <property type="term" value="P:response to estrogen"/>
    <property type="evidence" value="ECO:0000270"/>
    <property type="project" value="RGD"/>
</dbReference>
<dbReference type="GO" id="GO:0051384">
    <property type="term" value="P:response to glucocorticoid"/>
    <property type="evidence" value="ECO:0000270"/>
    <property type="project" value="RGD"/>
</dbReference>
<dbReference type="GO" id="GO:0042542">
    <property type="term" value="P:response to hydrogen peroxide"/>
    <property type="evidence" value="ECO:0000270"/>
    <property type="project" value="RGD"/>
</dbReference>
<dbReference type="GO" id="GO:0001666">
    <property type="term" value="P:response to hypoxia"/>
    <property type="evidence" value="ECO:0000270"/>
    <property type="project" value="RGD"/>
</dbReference>
<dbReference type="GO" id="GO:0002931">
    <property type="term" value="P:response to ischemia"/>
    <property type="evidence" value="ECO:0000270"/>
    <property type="project" value="RGD"/>
</dbReference>
<dbReference type="GO" id="GO:0032496">
    <property type="term" value="P:response to lipopolysaccharide"/>
    <property type="evidence" value="ECO:0000270"/>
    <property type="project" value="RGD"/>
</dbReference>
<dbReference type="GO" id="GO:1904638">
    <property type="term" value="P:response to resveratrol"/>
    <property type="evidence" value="ECO:0000270"/>
    <property type="project" value="RGD"/>
</dbReference>
<dbReference type="GO" id="GO:0006986">
    <property type="term" value="P:response to unfolded protein"/>
    <property type="evidence" value="ECO:0000266"/>
    <property type="project" value="RGD"/>
</dbReference>
<dbReference type="GO" id="GO:0009410">
    <property type="term" value="P:response to xenobiotic stimulus"/>
    <property type="evidence" value="ECO:0000270"/>
    <property type="project" value="RGD"/>
</dbReference>
<dbReference type="GO" id="GO:0042110">
    <property type="term" value="P:T cell activation"/>
    <property type="evidence" value="ECO:0000266"/>
    <property type="project" value="RGD"/>
</dbReference>
<dbReference type="CDD" id="cd03344">
    <property type="entry name" value="GroEL"/>
    <property type="match status" value="1"/>
</dbReference>
<dbReference type="FunFam" id="3.50.7.10:FF:000001">
    <property type="entry name" value="60 kDa chaperonin"/>
    <property type="match status" value="1"/>
</dbReference>
<dbReference type="FunFam" id="3.30.260.10:FF:000019">
    <property type="entry name" value="60 kDa heat shock mitochondrial"/>
    <property type="match status" value="1"/>
</dbReference>
<dbReference type="FunFam" id="1.10.560.10:FF:000011">
    <property type="entry name" value="60 kDa heat shock protein, mitochondrial"/>
    <property type="match status" value="1"/>
</dbReference>
<dbReference type="FunFam" id="1.10.560.10:FF:000026">
    <property type="entry name" value="Chaperonin 60 subunit alpha 2 chloroplastic"/>
    <property type="match status" value="1"/>
</dbReference>
<dbReference type="FunFam" id="3.30.260.10:FF:000018">
    <property type="entry name" value="Heat shock protein 60"/>
    <property type="match status" value="1"/>
</dbReference>
<dbReference type="Gene3D" id="3.50.7.10">
    <property type="entry name" value="GroEL"/>
    <property type="match status" value="1"/>
</dbReference>
<dbReference type="Gene3D" id="1.10.560.10">
    <property type="entry name" value="GroEL-like equatorial domain"/>
    <property type="match status" value="1"/>
</dbReference>
<dbReference type="Gene3D" id="3.30.260.10">
    <property type="entry name" value="TCP-1-like chaperonin intermediate domain"/>
    <property type="match status" value="1"/>
</dbReference>
<dbReference type="HAMAP" id="MF_00600">
    <property type="entry name" value="CH60"/>
    <property type="match status" value="1"/>
</dbReference>
<dbReference type="InterPro" id="IPR018370">
    <property type="entry name" value="Chaperonin_Cpn60_CS"/>
</dbReference>
<dbReference type="InterPro" id="IPR001844">
    <property type="entry name" value="Cpn60/GroEL"/>
</dbReference>
<dbReference type="InterPro" id="IPR002423">
    <property type="entry name" value="Cpn60/GroEL/TCP-1"/>
</dbReference>
<dbReference type="InterPro" id="IPR027409">
    <property type="entry name" value="GroEL-like_apical_dom_sf"/>
</dbReference>
<dbReference type="InterPro" id="IPR027413">
    <property type="entry name" value="GROEL-like_equatorial_sf"/>
</dbReference>
<dbReference type="InterPro" id="IPR027410">
    <property type="entry name" value="TCP-1-like_intermed_sf"/>
</dbReference>
<dbReference type="NCBIfam" id="TIGR02348">
    <property type="entry name" value="GroEL"/>
    <property type="match status" value="1"/>
</dbReference>
<dbReference type="NCBIfam" id="NF000592">
    <property type="entry name" value="PRK00013.1"/>
    <property type="match status" value="1"/>
</dbReference>
<dbReference type="NCBIfam" id="NF009487">
    <property type="entry name" value="PRK12849.1"/>
    <property type="match status" value="1"/>
</dbReference>
<dbReference type="NCBIfam" id="NF009488">
    <property type="entry name" value="PRK12850.1"/>
    <property type="match status" value="1"/>
</dbReference>
<dbReference type="NCBIfam" id="NF009489">
    <property type="entry name" value="PRK12851.1"/>
    <property type="match status" value="1"/>
</dbReference>
<dbReference type="PANTHER" id="PTHR45633">
    <property type="entry name" value="60 KDA HEAT SHOCK PROTEIN, MITOCHONDRIAL"/>
    <property type="match status" value="1"/>
</dbReference>
<dbReference type="Pfam" id="PF00118">
    <property type="entry name" value="Cpn60_TCP1"/>
    <property type="match status" value="1"/>
</dbReference>
<dbReference type="PRINTS" id="PR00298">
    <property type="entry name" value="CHAPERONIN60"/>
</dbReference>
<dbReference type="SUPFAM" id="SSF52029">
    <property type="entry name" value="GroEL apical domain-like"/>
    <property type="match status" value="1"/>
</dbReference>
<dbReference type="SUPFAM" id="SSF48592">
    <property type="entry name" value="GroEL equatorial domain-like"/>
    <property type="match status" value="1"/>
</dbReference>
<dbReference type="SUPFAM" id="SSF54849">
    <property type="entry name" value="GroEL-intermediate domain like"/>
    <property type="match status" value="1"/>
</dbReference>
<dbReference type="PROSITE" id="PS00296">
    <property type="entry name" value="CHAPERONINS_CPN60"/>
    <property type="match status" value="1"/>
</dbReference>
<organism>
    <name type="scientific">Rattus norvegicus</name>
    <name type="common">Rat</name>
    <dbReference type="NCBI Taxonomy" id="10116"/>
    <lineage>
        <taxon>Eukaryota</taxon>
        <taxon>Metazoa</taxon>
        <taxon>Chordata</taxon>
        <taxon>Craniata</taxon>
        <taxon>Vertebrata</taxon>
        <taxon>Euteleostomi</taxon>
        <taxon>Mammalia</taxon>
        <taxon>Eutheria</taxon>
        <taxon>Euarchontoglires</taxon>
        <taxon>Glires</taxon>
        <taxon>Rodentia</taxon>
        <taxon>Myomorpha</taxon>
        <taxon>Muroidea</taxon>
        <taxon>Muridae</taxon>
        <taxon>Murinae</taxon>
        <taxon>Rattus</taxon>
    </lineage>
</organism>
<comment type="function">
    <text evidence="2">Chaperonin implicated in mitochondrial protein import and macromolecular assembly. Together with Hsp10, facilitates the correct folding of imported proteins. May also prevent misfolding and promote the refolding and proper assembly of unfolded polypeptides generated under stress conditions in the mitochondrial matrix. The functional units of these chaperonins consist of heptameric rings of the large subunit Hsp60, which function as a back-to-back double ring. In a cyclic reaction, Hsp60 ring complexes bind one unfolded substrate protein per ring, followed by the binding of ATP and association with 2 heptameric rings of the co-chaperonin Hsp10. This leads to sequestration of the substrate protein in the inner cavity of Hsp60 where, for a certain period of time, it can fold undisturbed by other cell components. Synchronous hydrolysis of ATP in all Hsp60 subunits results in the dissociation of the chaperonin rings and the release of ADP and the folded substrate protein.</text>
</comment>
<comment type="catalytic activity">
    <reaction evidence="2">
        <text>ATP + H2O + a folded polypeptide = ADP + phosphate + an unfolded polypeptide.</text>
        <dbReference type="EC" id="5.6.1.7"/>
    </reaction>
</comment>
<comment type="subunit">
    <text evidence="2 3">Homoheptamer arranged in a ring structure. The functional units of these chaperonins consist of heptameric rings of the large subunit Hsp60, which function as a back-to-back double ring. Interacts with 2 heptameric Hsp10 rings to form the symmetrical football complex (By similarity). Interacts with HRAS (By similarity). Interacts with ATAD3A. Interacts with ETFBKMT and EEF1AKMT3 (By similarity). Interacts with MFHAS1 (By similarity).</text>
</comment>
<comment type="interaction">
    <interactant intactId="EBI-432091">
        <id>P63039</id>
    </interactant>
    <interactant intactId="EBI-822405">
        <id>Q63690</id>
        <label>Bax</label>
    </interactant>
    <organismsDiffer>false</organismsDiffer>
    <experiments>2</experiments>
</comment>
<comment type="subcellular location">
    <subcellularLocation>
        <location evidence="2">Mitochondrion matrix</location>
    </subcellularLocation>
</comment>
<comment type="similarity">
    <text evidence="4">Belongs to the chaperonin (HSP60) family.</text>
</comment>
<keyword id="KW-0007">Acetylation</keyword>
<keyword id="KW-0067">ATP-binding</keyword>
<keyword id="KW-0143">Chaperone</keyword>
<keyword id="KW-0903">Direct protein sequencing</keyword>
<keyword id="KW-0413">Isomerase</keyword>
<keyword id="KW-1017">Isopeptide bond</keyword>
<keyword id="KW-0496">Mitochondrion</keyword>
<keyword id="KW-0547">Nucleotide-binding</keyword>
<keyword id="KW-0597">Phosphoprotein</keyword>
<keyword id="KW-1185">Reference proteome</keyword>
<keyword id="KW-0809">Transit peptide</keyword>
<keyword id="KW-0832">Ubl conjugation</keyword>
<proteinExistence type="evidence at protein level"/>
<name>CH60_RAT</name>
<reference key="1">
    <citation type="journal article" date="1990" name="Nucleic Acids Res.">
        <title>cDNA and deduced amino acid sequence of rat liver prehsp60 (chaperonin-60).</title>
        <authorList>
            <person name="Peralta D."/>
            <person name="Hartman D.J."/>
            <person name="McIntosh A.M."/>
            <person name="Hoogenraad N.J."/>
            <person name="Hoej P.B."/>
        </authorList>
    </citation>
    <scope>NUCLEOTIDE SEQUENCE [MRNA]</scope>
    <source>
        <strain>Wistar</strain>
        <tissue>Liver</tissue>
    </source>
</reference>
<reference key="2">
    <citation type="submission" date="1997-01" db="EMBL/GenBank/DDBJ databases">
        <authorList>
            <person name="Ryan M.T."/>
            <person name="Herd S.M."/>
            <person name="Sberna G."/>
            <person name="Samuel M.M."/>
            <person name="Hoogenraad N.J."/>
            <person name="Hoej P.B."/>
        </authorList>
    </citation>
    <scope>NUCLEOTIDE SEQUENCE [GENOMIC DNA]</scope>
    <source>
        <strain>Sprague-Dawley</strain>
        <strain>Wistar</strain>
    </source>
</reference>
<reference key="3">
    <citation type="journal article" date="2004" name="Genome Res.">
        <title>The status, quality, and expansion of the NIH full-length cDNA project: the Mammalian Gene Collection (MGC).</title>
        <authorList>
            <consortium name="The MGC Project Team"/>
        </authorList>
    </citation>
    <scope>NUCLEOTIDE SEQUENCE [LARGE SCALE MRNA]</scope>
    <source>
        <tissue>Heart</tissue>
    </source>
</reference>
<reference key="4">
    <citation type="journal article" date="1990" name="Nucleic Acids Res.">
        <title>Nucleotide sequence of rat hsp60 (chaperonin, GroEL homolog) cDNA.</title>
        <authorList>
            <person name="Venner T.J."/>
            <person name="Gupta R.S."/>
        </authorList>
    </citation>
    <scope>NUCLEOTIDE SEQUENCE [MRNA] OF 27-573</scope>
    <source>
        <tissue>Kidney</tissue>
    </source>
</reference>
<reference key="5">
    <citation type="submission" date="2007-07" db="UniProtKB">
        <authorList>
            <person name="Lubec G."/>
            <person name="Afjehi-Sadat L."/>
            <person name="Diao W."/>
            <person name="Kang S.U."/>
        </authorList>
    </citation>
    <scope>PROTEIN SEQUENCE OF 38-58; 61-72; 143-157; 222-233; 237-309; 345-352; 371-387; 397-405; 421-446; 463-469 AND 482-493</scope>
    <scope>IDENTIFICATION BY MASS SPECTROMETRY</scope>
    <source>
        <strain>Sprague-Dawley</strain>
        <tissue>Brain</tissue>
        <tissue>Hippocampus</tissue>
        <tissue>Spinal cord</tissue>
    </source>
</reference>
<reference key="6">
    <citation type="journal article" date="2012" name="Nat. Commun.">
        <title>Quantitative maps of protein phosphorylation sites across 14 different rat organs and tissues.</title>
        <authorList>
            <person name="Lundby A."/>
            <person name="Secher A."/>
            <person name="Lage K."/>
            <person name="Nordsborg N.B."/>
            <person name="Dmytriyev A."/>
            <person name="Lundby C."/>
            <person name="Olsen J.V."/>
        </authorList>
    </citation>
    <scope>PHOSPHORYLATION [LARGE SCALE ANALYSIS] AT SER-70</scope>
    <scope>IDENTIFICATION BY MASS SPECTROMETRY [LARGE SCALE ANALYSIS]</scope>
</reference>
<accession>P63039</accession>
<accession>P19226</accession>
<accession>P19227</accession>
<accession>P97602</accession>
<protein>
    <recommendedName>
        <fullName>60 kDa heat shock protein, mitochondrial</fullName>
        <ecNumber evidence="2">5.6.1.7</ecNumber>
    </recommendedName>
    <alternativeName>
        <fullName>60 kDa chaperonin</fullName>
    </alternativeName>
    <alternativeName>
        <fullName>Chaperonin 60</fullName>
        <shortName>CPN60</shortName>
    </alternativeName>
    <alternativeName>
        <fullName>HSP-65</fullName>
    </alternativeName>
    <alternativeName>
        <fullName>Heat shock protein 60</fullName>
        <shortName>HSP-60</shortName>
        <shortName>Hsp60</shortName>
    </alternativeName>
    <alternativeName>
        <fullName>Mitochondrial matrix protein P1</fullName>
    </alternativeName>
</protein>
<gene>
    <name type="primary">Hspd1</name>
    <name type="synonym">Hsp60</name>
</gene>
<feature type="transit peptide" description="Mitochondrion" evidence="1">
    <location>
        <begin position="1"/>
        <end position="26"/>
    </location>
</feature>
<feature type="chain" id="PRO_0000005029" description="60 kDa heat shock protein, mitochondrial">
    <location>
        <begin position="27"/>
        <end position="573"/>
    </location>
</feature>
<feature type="binding site" evidence="2">
    <location>
        <position position="75"/>
    </location>
    <ligand>
        <name>ATP</name>
        <dbReference type="ChEBI" id="CHEBI:30616"/>
    </ligand>
</feature>
<feature type="binding site" evidence="2">
    <location>
        <begin position="111"/>
        <end position="115"/>
    </location>
    <ligand>
        <name>ATP</name>
        <dbReference type="ChEBI" id="CHEBI:30616"/>
    </ligand>
</feature>
<feature type="binding site" evidence="2">
    <location>
        <position position="440"/>
    </location>
    <ligand>
        <name>ATP</name>
        <dbReference type="ChEBI" id="CHEBI:30616"/>
    </ligand>
</feature>
<feature type="binding site" evidence="2">
    <location>
        <position position="520"/>
    </location>
    <ligand>
        <name>ATP</name>
        <dbReference type="ChEBI" id="CHEBI:30616"/>
    </ligand>
</feature>
<feature type="modified residue" description="N6-succinyllysine" evidence="3">
    <location>
        <position position="31"/>
    </location>
</feature>
<feature type="modified residue" description="Phosphoserine" evidence="2">
    <location>
        <position position="67"/>
    </location>
</feature>
<feature type="modified residue" description="Phosphoserine" evidence="5">
    <location>
        <position position="70"/>
    </location>
</feature>
<feature type="modified residue" description="N6-acetyllysine" evidence="3">
    <location>
        <position position="75"/>
    </location>
</feature>
<feature type="modified residue" description="N6-acetyllysine; alternate" evidence="2">
    <location>
        <position position="82"/>
    </location>
</feature>
<feature type="modified residue" description="N6-succinyllysine; alternate" evidence="3">
    <location>
        <position position="82"/>
    </location>
</feature>
<feature type="modified residue" description="N6-acetyllysine" evidence="3">
    <location>
        <position position="87"/>
    </location>
</feature>
<feature type="modified residue" description="Phosphotyrosine" evidence="2">
    <location>
        <position position="90"/>
    </location>
</feature>
<feature type="modified residue" description="N6-acetyllysine" evidence="3">
    <location>
        <position position="91"/>
    </location>
</feature>
<feature type="modified residue" description="N6-acetyllysine; alternate" evidence="2">
    <location>
        <position position="125"/>
    </location>
</feature>
<feature type="modified residue" description="N6-succinyllysine; alternate" evidence="3">
    <location>
        <position position="125"/>
    </location>
</feature>
<feature type="modified residue" description="N6-acetyllysine" evidence="2">
    <location>
        <position position="130"/>
    </location>
</feature>
<feature type="modified residue" description="N6-acetyllysine; alternate" evidence="3">
    <location>
        <position position="133"/>
    </location>
</feature>
<feature type="modified residue" description="N6-malonyllysine; alternate" evidence="1">
    <location>
        <position position="133"/>
    </location>
</feature>
<feature type="modified residue" description="N6-succinyllysine; alternate" evidence="3">
    <location>
        <position position="133"/>
    </location>
</feature>
<feature type="modified residue" description="N6-acetyllysine" evidence="3">
    <location>
        <position position="156"/>
    </location>
</feature>
<feature type="modified residue" description="N6-acetyllysine; alternate" evidence="3">
    <location>
        <position position="191"/>
    </location>
</feature>
<feature type="modified residue" description="N6-succinyllysine; alternate" evidence="3">
    <location>
        <position position="191"/>
    </location>
</feature>
<feature type="modified residue" description="N6-acetyllysine; alternate" evidence="2">
    <location>
        <position position="202"/>
    </location>
</feature>
<feature type="modified residue" description="N6-succinyllysine; alternate" evidence="3">
    <location>
        <position position="202"/>
    </location>
</feature>
<feature type="modified residue" description="N6-acetyllysine; alternate" evidence="3">
    <location>
        <position position="205"/>
    </location>
</feature>
<feature type="modified residue" description="N6-succinyllysine; alternate" evidence="3">
    <location>
        <position position="205"/>
    </location>
</feature>
<feature type="modified residue" description="N6-acetyllysine; alternate" evidence="2">
    <location>
        <position position="218"/>
    </location>
</feature>
<feature type="modified residue" description="N6-succinyllysine; alternate" evidence="3">
    <location>
        <position position="218"/>
    </location>
</feature>
<feature type="modified residue" description="N6-acetyllysine; alternate" evidence="3">
    <location>
        <position position="236"/>
    </location>
</feature>
<feature type="modified residue" description="N6-succinyllysine; alternate" evidence="3">
    <location>
        <position position="236"/>
    </location>
</feature>
<feature type="modified residue" description="N6-acetyllysine" evidence="3">
    <location>
        <position position="249"/>
    </location>
</feature>
<feature type="modified residue" description="N6-acetyllysine; alternate" evidence="3">
    <location>
        <position position="250"/>
    </location>
</feature>
<feature type="modified residue" description="N6-succinyllysine; alternate" evidence="3">
    <location>
        <position position="250"/>
    </location>
</feature>
<feature type="modified residue" description="N6-acetyllysine" evidence="2">
    <location>
        <position position="269"/>
    </location>
</feature>
<feature type="modified residue" description="N6-acetyllysine" evidence="3">
    <location>
        <position position="292"/>
    </location>
</feature>
<feature type="modified residue" description="N6-succinyllysine" evidence="3">
    <location>
        <position position="301"/>
    </location>
</feature>
<feature type="modified residue" description="N6-acetyllysine" evidence="3">
    <location>
        <position position="314"/>
    </location>
</feature>
<feature type="modified residue" description="N6-acetyllysine; alternate" evidence="2">
    <location>
        <position position="352"/>
    </location>
</feature>
<feature type="modified residue" description="N6-succinyllysine; alternate" evidence="3">
    <location>
        <position position="352"/>
    </location>
</feature>
<feature type="modified residue" description="N6-acetyllysine" evidence="2">
    <location>
        <position position="359"/>
    </location>
</feature>
<feature type="modified residue" description="N6-acetyllysine" evidence="3">
    <location>
        <position position="389"/>
    </location>
</feature>
<feature type="modified residue" description="N6-acetyllysine; alternate" evidence="2">
    <location>
        <position position="396"/>
    </location>
</feature>
<feature type="modified residue" description="N6-succinyllysine; alternate" evidence="3">
    <location>
        <position position="396"/>
    </location>
</feature>
<feature type="modified residue" description="Phosphoserine" evidence="3">
    <location>
        <position position="410"/>
    </location>
</feature>
<feature type="modified residue" description="N6-acetyllysine; alternate" evidence="3">
    <location>
        <position position="455"/>
    </location>
</feature>
<feature type="modified residue" description="N6-succinyllysine; alternate" evidence="3">
    <location>
        <position position="455"/>
    </location>
</feature>
<feature type="modified residue" description="N6-acetyllysine" evidence="2">
    <location>
        <position position="469"/>
    </location>
</feature>
<feature type="modified residue" description="N6-acetyllysine; alternate" evidence="3">
    <location>
        <position position="481"/>
    </location>
</feature>
<feature type="modified residue" description="N6-succinyllysine; alternate" evidence="3">
    <location>
        <position position="481"/>
    </location>
</feature>
<feature type="modified residue" description="Phosphoserine" evidence="2">
    <location>
        <position position="488"/>
    </location>
</feature>
<feature type="cross-link" description="Glycyl lysine isopeptide (Lys-Gly) (interchain with G-Cter in SUMO2)" evidence="2">
    <location>
        <position position="551"/>
    </location>
</feature>
<feature type="sequence conflict" description="In Ref. 2; AAC53362." evidence="4" ref="2">
    <original>R</original>
    <variation>P</variation>
    <location>
        <position position="121"/>
    </location>
</feature>
<feature type="sequence conflict" description="In Ref. 1; CAA38564." evidence="4" ref="1">
    <original>S</original>
    <variation>P</variation>
    <location>
        <position position="537"/>
    </location>
</feature>
<sequence length="573" mass="60955">MLRLPTVLRQMRPVSRALAPHLTRAYAKDVKFGADARALMLQGVDLLADAVAVTMGPKGRTVIIEQSWGSPKVTKDGVTVAKSIDLKDKYKNIGAKLVQDVANNTNEEAGDGTTTATVLARSIAKEGFEKISKGANPVEIRRGVMLAVDAVIAELKKQSKPVTTPEEIAQVATISANGDKDIGNIISDAMKKVGRKGVITVKDGKTLNDELEIIEGMKFDRGYISPYFINTSKGQKCEFQDAYVLLSEKKISSVQSIVPALEIANAHRKPLVIIAEDVDGEALSTLVLNRLKVGLQVVAVKAPGFGDNRKNQLKDMAIATGGAVFGEEGLNLNLEDVQAHDLGKVGEVIVTKDDAMLLKGKGDKAHIEKRIQEITEQLDITTSEYEKEKLNERLAKLSDGVAVLKVGGTSDVEVNEKKDRVTDALNATRAAVEEGIVLGGGCALLRCIPALDSLKPANEDQKIGIEIIKRALKIPAMTIAKNAGVEGSLIVEKILQSSSEVGYDAMLGDFVNMVEKGIIDPTKVVRTALLDAAGVASLLTTAEAVVTEIPKEEKDPGMGAMGGMGGGMGGGMF</sequence>
<evidence type="ECO:0000250" key="1"/>
<evidence type="ECO:0000250" key="2">
    <source>
        <dbReference type="UniProtKB" id="P10809"/>
    </source>
</evidence>
<evidence type="ECO:0000250" key="3">
    <source>
        <dbReference type="UniProtKB" id="P63038"/>
    </source>
</evidence>
<evidence type="ECO:0000305" key="4"/>
<evidence type="ECO:0007744" key="5">
    <source>
    </source>
</evidence>